<name>HEM1_LEGPL</name>
<proteinExistence type="inferred from homology"/>
<protein>
    <recommendedName>
        <fullName evidence="1">Glutamyl-tRNA reductase</fullName>
        <shortName evidence="1">GluTR</shortName>
        <ecNumber evidence="1">1.2.1.70</ecNumber>
    </recommendedName>
</protein>
<feature type="chain" id="PRO_1000004631" description="Glutamyl-tRNA reductase">
    <location>
        <begin position="1"/>
        <end position="424"/>
    </location>
</feature>
<feature type="active site" description="Nucleophile" evidence="1">
    <location>
        <position position="50"/>
    </location>
</feature>
<feature type="binding site" evidence="1">
    <location>
        <begin position="49"/>
        <end position="52"/>
    </location>
    <ligand>
        <name>substrate</name>
    </ligand>
</feature>
<feature type="binding site" evidence="1">
    <location>
        <position position="105"/>
    </location>
    <ligand>
        <name>substrate</name>
    </ligand>
</feature>
<feature type="binding site" evidence="1">
    <location>
        <begin position="110"/>
        <end position="112"/>
    </location>
    <ligand>
        <name>substrate</name>
    </ligand>
</feature>
<feature type="binding site" evidence="1">
    <location>
        <position position="116"/>
    </location>
    <ligand>
        <name>substrate</name>
    </ligand>
</feature>
<feature type="binding site" evidence="1">
    <location>
        <begin position="185"/>
        <end position="190"/>
    </location>
    <ligand>
        <name>NADP(+)</name>
        <dbReference type="ChEBI" id="CHEBI:58349"/>
    </ligand>
</feature>
<feature type="site" description="Important for activity" evidence="1">
    <location>
        <position position="95"/>
    </location>
</feature>
<evidence type="ECO:0000255" key="1">
    <source>
        <dbReference type="HAMAP-Rule" id="MF_00087"/>
    </source>
</evidence>
<comment type="function">
    <text evidence="1">Catalyzes the NADPH-dependent reduction of glutamyl-tRNA(Glu) to glutamate 1-semialdehyde (GSA).</text>
</comment>
<comment type="catalytic activity">
    <reaction evidence="1">
        <text>(S)-4-amino-5-oxopentanoate + tRNA(Glu) + NADP(+) = L-glutamyl-tRNA(Glu) + NADPH + H(+)</text>
        <dbReference type="Rhea" id="RHEA:12344"/>
        <dbReference type="Rhea" id="RHEA-COMP:9663"/>
        <dbReference type="Rhea" id="RHEA-COMP:9680"/>
        <dbReference type="ChEBI" id="CHEBI:15378"/>
        <dbReference type="ChEBI" id="CHEBI:57501"/>
        <dbReference type="ChEBI" id="CHEBI:57783"/>
        <dbReference type="ChEBI" id="CHEBI:58349"/>
        <dbReference type="ChEBI" id="CHEBI:78442"/>
        <dbReference type="ChEBI" id="CHEBI:78520"/>
        <dbReference type="EC" id="1.2.1.70"/>
    </reaction>
</comment>
<comment type="pathway">
    <text evidence="1">Porphyrin-containing compound metabolism; protoporphyrin-IX biosynthesis; 5-aminolevulinate from L-glutamyl-tRNA(Glu): step 1/2.</text>
</comment>
<comment type="subunit">
    <text evidence="1">Homodimer.</text>
</comment>
<comment type="domain">
    <text evidence="1">Possesses an unusual extended V-shaped dimeric structure with each monomer consisting of three distinct domains arranged along a curved 'spinal' alpha-helix. The N-terminal catalytic domain specifically recognizes the glutamate moiety of the substrate. The second domain is the NADPH-binding domain, and the third C-terminal domain is responsible for dimerization.</text>
</comment>
<comment type="miscellaneous">
    <text evidence="1">During catalysis, the active site Cys acts as a nucleophile attacking the alpha-carbonyl group of tRNA-bound glutamate with the formation of a thioester intermediate between enzyme and glutamate, and the concomitant release of tRNA(Glu). The thioester intermediate is finally reduced by direct hydride transfer from NADPH, to form the product GSA.</text>
</comment>
<comment type="similarity">
    <text evidence="1">Belongs to the glutamyl-tRNA reductase family.</text>
</comment>
<accession>Q5WUB2</accession>
<sequence>MVFVACGLNHKTAPIHVREKVALQPAMQDSLLSSLLDLPEVNEAAILSTCNRTEIYCDTNTPEVLGNWLAHEHQLSEELLSQFLYIHQGKEGIKHTLRVASGLDSMMIGEPQILGQMKQAYQHACRLGTVKTQLRPVFEYIFRASKRIRTRSGIGANPVSIAYAAVQLIGQLFKNYHSLSVFLIGSGETASLVAKYLHQHGVHRFLIASRTLENAQKLAETFDGKTLSIGDIPQYLPLADVVISATACPLPFINKSLVEHALEQRNHAPMFLLDLAVPRDIEGNVNELEQVHLYNVDDLQSMIEKGMDERRNAALQAEQLIESELDNYIRWHRSLRAKDVICDYRNQMHTLAQQELQRALKKISAGQNQQDVLNEFSMRLVNKLTHNPTIGLRQMAWDNREDLLDLARYLFDTTANQSLYEEIS</sequence>
<gene>
    <name evidence="1" type="primary">hemA</name>
    <name type="ordered locus">lpl2256</name>
</gene>
<organism>
    <name type="scientific">Legionella pneumophila (strain Lens)</name>
    <dbReference type="NCBI Taxonomy" id="297245"/>
    <lineage>
        <taxon>Bacteria</taxon>
        <taxon>Pseudomonadati</taxon>
        <taxon>Pseudomonadota</taxon>
        <taxon>Gammaproteobacteria</taxon>
        <taxon>Legionellales</taxon>
        <taxon>Legionellaceae</taxon>
        <taxon>Legionella</taxon>
    </lineage>
</organism>
<keyword id="KW-0521">NADP</keyword>
<keyword id="KW-0560">Oxidoreductase</keyword>
<keyword id="KW-0627">Porphyrin biosynthesis</keyword>
<dbReference type="EC" id="1.2.1.70" evidence="1"/>
<dbReference type="EMBL" id="CR628337">
    <property type="protein sequence ID" value="CAH16496.1"/>
    <property type="molecule type" value="Genomic_DNA"/>
</dbReference>
<dbReference type="RefSeq" id="WP_011216227.1">
    <property type="nucleotide sequence ID" value="NC_006369.1"/>
</dbReference>
<dbReference type="SMR" id="Q5WUB2"/>
<dbReference type="KEGG" id="lpf:lpl2256"/>
<dbReference type="LegioList" id="lpl2256"/>
<dbReference type="HOGENOM" id="CLU_035113_2_2_6"/>
<dbReference type="UniPathway" id="UPA00251">
    <property type="reaction ID" value="UER00316"/>
</dbReference>
<dbReference type="Proteomes" id="UP000002517">
    <property type="component" value="Chromosome"/>
</dbReference>
<dbReference type="GO" id="GO:0008883">
    <property type="term" value="F:glutamyl-tRNA reductase activity"/>
    <property type="evidence" value="ECO:0007669"/>
    <property type="project" value="UniProtKB-UniRule"/>
</dbReference>
<dbReference type="GO" id="GO:0050661">
    <property type="term" value="F:NADP binding"/>
    <property type="evidence" value="ECO:0007669"/>
    <property type="project" value="InterPro"/>
</dbReference>
<dbReference type="GO" id="GO:0019353">
    <property type="term" value="P:protoporphyrinogen IX biosynthetic process from glutamate"/>
    <property type="evidence" value="ECO:0007669"/>
    <property type="project" value="TreeGrafter"/>
</dbReference>
<dbReference type="CDD" id="cd05213">
    <property type="entry name" value="NAD_bind_Glutamyl_tRNA_reduct"/>
    <property type="match status" value="1"/>
</dbReference>
<dbReference type="FunFam" id="3.30.460.30:FF:000001">
    <property type="entry name" value="Glutamyl-tRNA reductase"/>
    <property type="match status" value="1"/>
</dbReference>
<dbReference type="FunFam" id="3.40.50.720:FF:000031">
    <property type="entry name" value="Glutamyl-tRNA reductase"/>
    <property type="match status" value="1"/>
</dbReference>
<dbReference type="Gene3D" id="3.30.460.30">
    <property type="entry name" value="Glutamyl-tRNA reductase, N-terminal domain"/>
    <property type="match status" value="1"/>
</dbReference>
<dbReference type="Gene3D" id="3.40.50.720">
    <property type="entry name" value="NAD(P)-binding Rossmann-like Domain"/>
    <property type="match status" value="1"/>
</dbReference>
<dbReference type="HAMAP" id="MF_00087">
    <property type="entry name" value="Glu_tRNA_reductase"/>
    <property type="match status" value="1"/>
</dbReference>
<dbReference type="InterPro" id="IPR000343">
    <property type="entry name" value="4pyrrol_synth_GluRdtase"/>
</dbReference>
<dbReference type="InterPro" id="IPR015896">
    <property type="entry name" value="4pyrrol_synth_GluRdtase_dimer"/>
</dbReference>
<dbReference type="InterPro" id="IPR015895">
    <property type="entry name" value="4pyrrol_synth_GluRdtase_N"/>
</dbReference>
<dbReference type="InterPro" id="IPR036453">
    <property type="entry name" value="GluRdtase_dimer_dom_sf"/>
</dbReference>
<dbReference type="InterPro" id="IPR036343">
    <property type="entry name" value="GluRdtase_N_sf"/>
</dbReference>
<dbReference type="InterPro" id="IPR036291">
    <property type="entry name" value="NAD(P)-bd_dom_sf"/>
</dbReference>
<dbReference type="InterPro" id="IPR006151">
    <property type="entry name" value="Shikm_DH/Glu-tRNA_Rdtase"/>
</dbReference>
<dbReference type="NCBIfam" id="TIGR01035">
    <property type="entry name" value="hemA"/>
    <property type="match status" value="1"/>
</dbReference>
<dbReference type="PANTHER" id="PTHR43013">
    <property type="entry name" value="GLUTAMYL-TRNA REDUCTASE"/>
    <property type="match status" value="1"/>
</dbReference>
<dbReference type="PANTHER" id="PTHR43013:SF1">
    <property type="entry name" value="GLUTAMYL-TRNA REDUCTASE"/>
    <property type="match status" value="1"/>
</dbReference>
<dbReference type="Pfam" id="PF00745">
    <property type="entry name" value="GlutR_dimer"/>
    <property type="match status" value="1"/>
</dbReference>
<dbReference type="Pfam" id="PF05201">
    <property type="entry name" value="GlutR_N"/>
    <property type="match status" value="1"/>
</dbReference>
<dbReference type="Pfam" id="PF01488">
    <property type="entry name" value="Shikimate_DH"/>
    <property type="match status" value="1"/>
</dbReference>
<dbReference type="PIRSF" id="PIRSF000445">
    <property type="entry name" value="4pyrrol_synth_GluRdtase"/>
    <property type="match status" value="1"/>
</dbReference>
<dbReference type="SUPFAM" id="SSF69742">
    <property type="entry name" value="Glutamyl tRNA-reductase catalytic, N-terminal domain"/>
    <property type="match status" value="1"/>
</dbReference>
<dbReference type="SUPFAM" id="SSF69075">
    <property type="entry name" value="Glutamyl tRNA-reductase dimerization domain"/>
    <property type="match status" value="1"/>
</dbReference>
<dbReference type="SUPFAM" id="SSF51735">
    <property type="entry name" value="NAD(P)-binding Rossmann-fold domains"/>
    <property type="match status" value="1"/>
</dbReference>
<reference key="1">
    <citation type="journal article" date="2004" name="Nat. Genet.">
        <title>Evidence in the Legionella pneumophila genome for exploitation of host cell functions and high genome plasticity.</title>
        <authorList>
            <person name="Cazalet C."/>
            <person name="Rusniok C."/>
            <person name="Brueggemann H."/>
            <person name="Zidane N."/>
            <person name="Magnier A."/>
            <person name="Ma L."/>
            <person name="Tichit M."/>
            <person name="Jarraud S."/>
            <person name="Bouchier C."/>
            <person name="Vandenesch F."/>
            <person name="Kunst F."/>
            <person name="Etienne J."/>
            <person name="Glaser P."/>
            <person name="Buchrieser C."/>
        </authorList>
    </citation>
    <scope>NUCLEOTIDE SEQUENCE [LARGE SCALE GENOMIC DNA]</scope>
    <source>
        <strain>Lens</strain>
    </source>
</reference>